<organism>
    <name type="scientific">Erwinia tasmaniensis (strain DSM 17950 / CFBP 7177 / CIP 109463 / NCPPB 4357 / Et1/99)</name>
    <dbReference type="NCBI Taxonomy" id="465817"/>
    <lineage>
        <taxon>Bacteria</taxon>
        <taxon>Pseudomonadati</taxon>
        <taxon>Pseudomonadota</taxon>
        <taxon>Gammaproteobacteria</taxon>
        <taxon>Enterobacterales</taxon>
        <taxon>Erwiniaceae</taxon>
        <taxon>Erwinia</taxon>
    </lineage>
</organism>
<reference key="1">
    <citation type="journal article" date="2008" name="Environ. Microbiol.">
        <title>The genome of Erwinia tasmaniensis strain Et1/99, a non-pathogenic bacterium in the genus Erwinia.</title>
        <authorList>
            <person name="Kube M."/>
            <person name="Migdoll A.M."/>
            <person name="Mueller I."/>
            <person name="Kuhl H."/>
            <person name="Beck A."/>
            <person name="Reinhardt R."/>
            <person name="Geider K."/>
        </authorList>
    </citation>
    <scope>NUCLEOTIDE SEQUENCE [LARGE SCALE GENOMIC DNA]</scope>
    <source>
        <strain>DSM 17950 / CFBP 7177 / CIP 109463 / NCPPB 4357 / Et1/99</strain>
    </source>
</reference>
<name>AROK_ERWT9</name>
<proteinExistence type="inferred from homology"/>
<protein>
    <recommendedName>
        <fullName evidence="1">Shikimate kinase 1</fullName>
        <shortName evidence="1">SK 1</shortName>
        <ecNumber evidence="1">2.7.1.71</ecNumber>
    </recommendedName>
</protein>
<accession>B2VJW8</accession>
<sequence length="173" mass="19505">MAEKRNIFLVGPMGAGKSTIGRQLAQQLNMEFFDSDQEIERRTGADVGWVFDVEGEEGFRDREEKIINELTEKQGIVLATGGGSVKSRETRNRLSARGVVVYLETTIEKQLARTQRDKKRPLLQVESPPREVLEALADERNPLYDEIADVTIRTDDQSAKVVANQIINMLEKS</sequence>
<evidence type="ECO:0000255" key="1">
    <source>
        <dbReference type="HAMAP-Rule" id="MF_00109"/>
    </source>
</evidence>
<gene>
    <name evidence="1" type="primary">aroK</name>
    <name type="ordered locus">ETA_32060</name>
</gene>
<dbReference type="EC" id="2.7.1.71" evidence="1"/>
<dbReference type="EMBL" id="CU468135">
    <property type="protein sequence ID" value="CAO98252.1"/>
    <property type="molecule type" value="Genomic_DNA"/>
</dbReference>
<dbReference type="RefSeq" id="WP_012442882.1">
    <property type="nucleotide sequence ID" value="NC_010694.1"/>
</dbReference>
<dbReference type="SMR" id="B2VJW8"/>
<dbReference type="STRING" id="465817.ETA_32060"/>
<dbReference type="KEGG" id="eta:ETA_32060"/>
<dbReference type="eggNOG" id="COG0703">
    <property type="taxonomic scope" value="Bacteria"/>
</dbReference>
<dbReference type="HOGENOM" id="CLU_057607_2_2_6"/>
<dbReference type="OrthoDB" id="9800332at2"/>
<dbReference type="UniPathway" id="UPA00053">
    <property type="reaction ID" value="UER00088"/>
</dbReference>
<dbReference type="Proteomes" id="UP000001726">
    <property type="component" value="Chromosome"/>
</dbReference>
<dbReference type="GO" id="GO:0005829">
    <property type="term" value="C:cytosol"/>
    <property type="evidence" value="ECO:0007669"/>
    <property type="project" value="TreeGrafter"/>
</dbReference>
<dbReference type="GO" id="GO:0005524">
    <property type="term" value="F:ATP binding"/>
    <property type="evidence" value="ECO:0007669"/>
    <property type="project" value="UniProtKB-UniRule"/>
</dbReference>
<dbReference type="GO" id="GO:0000287">
    <property type="term" value="F:magnesium ion binding"/>
    <property type="evidence" value="ECO:0007669"/>
    <property type="project" value="UniProtKB-UniRule"/>
</dbReference>
<dbReference type="GO" id="GO:0004765">
    <property type="term" value="F:shikimate kinase activity"/>
    <property type="evidence" value="ECO:0007669"/>
    <property type="project" value="UniProtKB-UniRule"/>
</dbReference>
<dbReference type="GO" id="GO:0008652">
    <property type="term" value="P:amino acid biosynthetic process"/>
    <property type="evidence" value="ECO:0007669"/>
    <property type="project" value="UniProtKB-KW"/>
</dbReference>
<dbReference type="GO" id="GO:0009073">
    <property type="term" value="P:aromatic amino acid family biosynthetic process"/>
    <property type="evidence" value="ECO:0007669"/>
    <property type="project" value="UniProtKB-KW"/>
</dbReference>
<dbReference type="GO" id="GO:0009423">
    <property type="term" value="P:chorismate biosynthetic process"/>
    <property type="evidence" value="ECO:0007669"/>
    <property type="project" value="UniProtKB-UniRule"/>
</dbReference>
<dbReference type="CDD" id="cd00464">
    <property type="entry name" value="SK"/>
    <property type="match status" value="1"/>
</dbReference>
<dbReference type="FunFam" id="3.40.50.300:FF:000099">
    <property type="entry name" value="Shikimate kinase 1"/>
    <property type="match status" value="1"/>
</dbReference>
<dbReference type="Gene3D" id="3.40.50.300">
    <property type="entry name" value="P-loop containing nucleotide triphosphate hydrolases"/>
    <property type="match status" value="1"/>
</dbReference>
<dbReference type="HAMAP" id="MF_00109">
    <property type="entry name" value="Shikimate_kinase"/>
    <property type="match status" value="1"/>
</dbReference>
<dbReference type="InterPro" id="IPR027417">
    <property type="entry name" value="P-loop_NTPase"/>
</dbReference>
<dbReference type="InterPro" id="IPR031322">
    <property type="entry name" value="Shikimate/glucono_kinase"/>
</dbReference>
<dbReference type="InterPro" id="IPR000623">
    <property type="entry name" value="Shikimate_kinase/TSH1"/>
</dbReference>
<dbReference type="InterPro" id="IPR023000">
    <property type="entry name" value="Shikimate_kinase_CS"/>
</dbReference>
<dbReference type="NCBIfam" id="NF003456">
    <property type="entry name" value="PRK05057.1"/>
    <property type="match status" value="1"/>
</dbReference>
<dbReference type="PANTHER" id="PTHR21087">
    <property type="entry name" value="SHIKIMATE KINASE"/>
    <property type="match status" value="1"/>
</dbReference>
<dbReference type="PANTHER" id="PTHR21087:SF16">
    <property type="entry name" value="SHIKIMATE KINASE 1, CHLOROPLASTIC"/>
    <property type="match status" value="1"/>
</dbReference>
<dbReference type="Pfam" id="PF01202">
    <property type="entry name" value="SKI"/>
    <property type="match status" value="1"/>
</dbReference>
<dbReference type="PRINTS" id="PR01100">
    <property type="entry name" value="SHIKIMTKNASE"/>
</dbReference>
<dbReference type="SUPFAM" id="SSF52540">
    <property type="entry name" value="P-loop containing nucleoside triphosphate hydrolases"/>
    <property type="match status" value="1"/>
</dbReference>
<dbReference type="PROSITE" id="PS01128">
    <property type="entry name" value="SHIKIMATE_KINASE"/>
    <property type="match status" value="1"/>
</dbReference>
<feature type="chain" id="PRO_1000094389" description="Shikimate kinase 1">
    <location>
        <begin position="1"/>
        <end position="173"/>
    </location>
</feature>
<feature type="binding site" evidence="1">
    <location>
        <begin position="14"/>
        <end position="19"/>
    </location>
    <ligand>
        <name>ATP</name>
        <dbReference type="ChEBI" id="CHEBI:30616"/>
    </ligand>
</feature>
<feature type="binding site" evidence="1">
    <location>
        <position position="18"/>
    </location>
    <ligand>
        <name>Mg(2+)</name>
        <dbReference type="ChEBI" id="CHEBI:18420"/>
    </ligand>
</feature>
<feature type="binding site" evidence="1">
    <location>
        <position position="36"/>
    </location>
    <ligand>
        <name>substrate</name>
    </ligand>
</feature>
<feature type="binding site" evidence="1">
    <location>
        <position position="60"/>
    </location>
    <ligand>
        <name>substrate</name>
    </ligand>
</feature>
<feature type="binding site" evidence="1">
    <location>
        <position position="82"/>
    </location>
    <ligand>
        <name>substrate</name>
    </ligand>
</feature>
<feature type="binding site" evidence="1">
    <location>
        <position position="120"/>
    </location>
    <ligand>
        <name>ATP</name>
        <dbReference type="ChEBI" id="CHEBI:30616"/>
    </ligand>
</feature>
<feature type="binding site" evidence="1">
    <location>
        <position position="140"/>
    </location>
    <ligand>
        <name>substrate</name>
    </ligand>
</feature>
<feature type="binding site" evidence="1">
    <location>
        <position position="157"/>
    </location>
    <ligand>
        <name>ATP</name>
        <dbReference type="ChEBI" id="CHEBI:30616"/>
    </ligand>
</feature>
<keyword id="KW-0028">Amino-acid biosynthesis</keyword>
<keyword id="KW-0057">Aromatic amino acid biosynthesis</keyword>
<keyword id="KW-0067">ATP-binding</keyword>
<keyword id="KW-0963">Cytoplasm</keyword>
<keyword id="KW-0418">Kinase</keyword>
<keyword id="KW-0460">Magnesium</keyword>
<keyword id="KW-0479">Metal-binding</keyword>
<keyword id="KW-0547">Nucleotide-binding</keyword>
<keyword id="KW-1185">Reference proteome</keyword>
<keyword id="KW-0808">Transferase</keyword>
<comment type="function">
    <text evidence="1">Catalyzes the specific phosphorylation of the 3-hydroxyl group of shikimic acid using ATP as a cosubstrate.</text>
</comment>
<comment type="catalytic activity">
    <reaction evidence="1">
        <text>shikimate + ATP = 3-phosphoshikimate + ADP + H(+)</text>
        <dbReference type="Rhea" id="RHEA:13121"/>
        <dbReference type="ChEBI" id="CHEBI:15378"/>
        <dbReference type="ChEBI" id="CHEBI:30616"/>
        <dbReference type="ChEBI" id="CHEBI:36208"/>
        <dbReference type="ChEBI" id="CHEBI:145989"/>
        <dbReference type="ChEBI" id="CHEBI:456216"/>
        <dbReference type="EC" id="2.7.1.71"/>
    </reaction>
</comment>
<comment type="cofactor">
    <cofactor evidence="1">
        <name>Mg(2+)</name>
        <dbReference type="ChEBI" id="CHEBI:18420"/>
    </cofactor>
    <text evidence="1">Binds 1 Mg(2+) ion per subunit.</text>
</comment>
<comment type="pathway">
    <text evidence="1">Metabolic intermediate biosynthesis; chorismate biosynthesis; chorismate from D-erythrose 4-phosphate and phosphoenolpyruvate: step 5/7.</text>
</comment>
<comment type="subunit">
    <text evidence="1">Monomer.</text>
</comment>
<comment type="subcellular location">
    <subcellularLocation>
        <location evidence="1">Cytoplasm</location>
    </subcellularLocation>
</comment>
<comment type="similarity">
    <text evidence="1">Belongs to the shikimate kinase family.</text>
</comment>